<accession>Q0CGA6</accession>
<sequence length="400" mass="42734">MLLTVLAVVGCFTAVNGHGYLTIPASRTRLGFETGIDTCPECSILEPVTAWPDLEAAQVGRSGPCGYNARVSVDYNQPSEYWGNEPVVTYTSGEVVEVQWCVDANGDHGGMFTYGICQNQTLVDKFLTPGYLPTNEEKQAAEDCFLDGELKCKDVSGQTCGYNPDCTEGAACWRNDWFTCNAFQANTARACQGVDGASLNSCKTTIAGGYTVTKRIKIPDYSSDHTLLRFRWNSFQTAQVYLHCADIAIAGSGGGTTSKSTTSTTSTTSTSRSTSTSAPTTTSSASTATPICTTQASLIPVTFQEFVTTMWGENVFVTGSISQLGSWSTDKAVALSATGYTASNPLWTTTIDLPAGTTFEYKFIKKETDGSIIWESDPNRSYTVPTGCSGTTATAAASWR</sequence>
<keyword id="KW-0119">Carbohydrate metabolism</keyword>
<keyword id="KW-0186">Copper</keyword>
<keyword id="KW-1015">Disulfide bond</keyword>
<keyword id="KW-0325">Glycoprotein</keyword>
<keyword id="KW-0479">Metal-binding</keyword>
<keyword id="KW-0488">Methylation</keyword>
<keyword id="KW-0560">Oxidoreductase</keyword>
<keyword id="KW-0624">Polysaccharide degradation</keyword>
<keyword id="KW-1185">Reference proteome</keyword>
<keyword id="KW-0964">Secreted</keyword>
<keyword id="KW-0732">Signal</keyword>
<feature type="signal peptide" evidence="3">
    <location>
        <begin position="1"/>
        <end position="17"/>
    </location>
</feature>
<feature type="chain" id="PRO_5004170133" description="AA13 family lytic polysaccharide monooxygenase A">
    <location>
        <begin position="18"/>
        <end position="400"/>
    </location>
</feature>
<feature type="domain" description="Chitin-binding type-4" evidence="3">
    <location>
        <begin position="18"/>
        <end position="247"/>
    </location>
</feature>
<feature type="domain" description="CBM20" evidence="5">
    <location>
        <begin position="293"/>
        <end position="400"/>
    </location>
</feature>
<feature type="region of interest" description="Disordered" evidence="6">
    <location>
        <begin position="254"/>
        <end position="287"/>
    </location>
</feature>
<feature type="compositionally biased region" description="Low complexity" evidence="6">
    <location>
        <begin position="257"/>
        <end position="287"/>
    </location>
</feature>
<feature type="binding site" evidence="1">
    <location>
        <position position="18"/>
    </location>
    <ligand>
        <name>Cu(2+)</name>
        <dbReference type="ChEBI" id="CHEBI:29036"/>
        <note>catalytic</note>
    </ligand>
</feature>
<feature type="binding site" evidence="1">
    <location>
        <position position="108"/>
    </location>
    <ligand>
        <name>Cu(2+)</name>
        <dbReference type="ChEBI" id="CHEBI:29036"/>
        <note>catalytic</note>
    </ligand>
</feature>
<feature type="binding site" evidence="1">
    <location>
        <position position="241"/>
    </location>
    <ligand>
        <name>Cu(2+)</name>
        <dbReference type="ChEBI" id="CHEBI:29036"/>
        <note>catalytic</note>
    </ligand>
</feature>
<feature type="modified residue" description="Methylhistidine" evidence="2">
    <location>
        <position position="18"/>
    </location>
</feature>
<feature type="glycosylation site" description="N-linked (GlcNAc...) asparagine" evidence="4">
    <location>
        <position position="119"/>
    </location>
</feature>
<feature type="glycosylation site" description="N-linked (GlcNAc...) asparagine" evidence="4">
    <location>
        <position position="379"/>
    </location>
</feature>
<feature type="disulfide bond" evidence="1">
    <location>
        <begin position="39"/>
        <end position="42"/>
    </location>
</feature>
<feature type="disulfide bond" evidence="1">
    <location>
        <begin position="65"/>
        <end position="244"/>
    </location>
</feature>
<feature type="disulfide bond" evidence="1">
    <location>
        <begin position="101"/>
        <end position="202"/>
    </location>
</feature>
<feature type="disulfide bond" evidence="1">
    <location>
        <begin position="117"/>
        <end position="144"/>
    </location>
</feature>
<feature type="disulfide bond" evidence="1">
    <location>
        <begin position="152"/>
        <end position="160"/>
    </location>
</feature>
<feature type="disulfide bond" evidence="1">
    <location>
        <begin position="166"/>
        <end position="172"/>
    </location>
</feature>
<feature type="disulfide bond" evidence="1">
    <location>
        <begin position="180"/>
        <end position="191"/>
    </location>
</feature>
<evidence type="ECO:0000250" key="1">
    <source>
        <dbReference type="UniProtKB" id="Q2U8Y3"/>
    </source>
</evidence>
<evidence type="ECO:0000250" key="2">
    <source>
        <dbReference type="UniProtKB" id="Q7SCE9"/>
    </source>
</evidence>
<evidence type="ECO:0000255" key="3"/>
<evidence type="ECO:0000255" key="4">
    <source>
        <dbReference type="PROSITE-ProRule" id="PRU00498"/>
    </source>
</evidence>
<evidence type="ECO:0000255" key="5">
    <source>
        <dbReference type="PROSITE-ProRule" id="PRU00594"/>
    </source>
</evidence>
<evidence type="ECO:0000256" key="6">
    <source>
        <dbReference type="SAM" id="MobiDB-lite"/>
    </source>
</evidence>
<evidence type="ECO:0000269" key="7">
    <source>
    </source>
</evidence>
<evidence type="ECO:0000303" key="8">
    <source>
    </source>
</evidence>
<evidence type="ECO:0000305" key="9"/>
<name>AA13_ASPTN</name>
<comment type="function">
    <text evidence="7 9">Starch-active lytic polysaccharide monooxygenase that oxidizes the C1 position of starch substrates (PubMed:27397613). Catalysis by LPMOs requires the reduction of the active-site copper from Cu(II) to Cu(I) by a reducing agent and H(2)O(2) or O(2) as a cosubstrate (Probable).</text>
</comment>
<comment type="catalytic activity">
    <reaction evidence="7">
        <text>starch + reduced acceptor + O2 = D-glucono-1,5-lactone-terminated malto-oligosaccharides + short-chain malto-oligosaccharides + acceptor + H2O.</text>
        <dbReference type="EC" id="1.14.99.55"/>
    </reaction>
</comment>
<comment type="cofactor">
    <cofactor evidence="2">
        <name>Cu(2+)</name>
        <dbReference type="ChEBI" id="CHEBI:29036"/>
    </cofactor>
    <text evidence="2">Binds 1 copper ion per subunit.</text>
</comment>
<comment type="activity regulation">
    <text evidence="7">Activity is inhibited by both beta-cyclodextrin or amylose that block the access to the active site.</text>
</comment>
<comment type="subcellular location">
    <subcellularLocation>
        <location evidence="7">Secreted</location>
    </subcellularLocation>
</comment>
<comment type="domain">
    <text evidence="7">The CBM20 domain is involved in binding to starch.</text>
</comment>
<comment type="PTM">
    <text evidence="7">O-mannosylated.</text>
</comment>
<comment type="biotechnology">
    <text evidence="2">Starch-active PMOs provide an expanded perspective on studies of starch metabolism and may have potential in the food and starch-based biofuel industries.</text>
</comment>
<comment type="similarity">
    <text evidence="9">Belongs to the polysaccharide monooxygenase AA13 family.</text>
</comment>
<dbReference type="EC" id="1.14.99.55" evidence="7"/>
<dbReference type="EMBL" id="CH476603">
    <property type="protein sequence ID" value="EAU32670.1"/>
    <property type="molecule type" value="Genomic_DNA"/>
</dbReference>
<dbReference type="RefSeq" id="XP_001209972.1">
    <property type="nucleotide sequence ID" value="XM_001209972.1"/>
</dbReference>
<dbReference type="SMR" id="Q0CGA6"/>
<dbReference type="STRING" id="341663.Q0CGA6"/>
<dbReference type="EnsemblFungi" id="EAU32670">
    <property type="protein sequence ID" value="EAU32670"/>
    <property type="gene ID" value="ATEG_07286"/>
</dbReference>
<dbReference type="GeneID" id="4319141"/>
<dbReference type="VEuPathDB" id="FungiDB:ATEG_07286"/>
<dbReference type="eggNOG" id="ENOG502QSJT">
    <property type="taxonomic scope" value="Eukaryota"/>
</dbReference>
<dbReference type="HOGENOM" id="CLU_055681_0_0_1"/>
<dbReference type="OMA" id="QACYRND"/>
<dbReference type="OrthoDB" id="550577at2759"/>
<dbReference type="BRENDA" id="1.14.99.55">
    <property type="organism ID" value="536"/>
</dbReference>
<dbReference type="Proteomes" id="UP000007963">
    <property type="component" value="Unassembled WGS sequence"/>
</dbReference>
<dbReference type="GO" id="GO:0005576">
    <property type="term" value="C:extracellular region"/>
    <property type="evidence" value="ECO:0007669"/>
    <property type="project" value="UniProtKB-SubCell"/>
</dbReference>
<dbReference type="GO" id="GO:0046872">
    <property type="term" value="F:metal ion binding"/>
    <property type="evidence" value="ECO:0007669"/>
    <property type="project" value="UniProtKB-KW"/>
</dbReference>
<dbReference type="GO" id="GO:0016491">
    <property type="term" value="F:oxidoreductase activity"/>
    <property type="evidence" value="ECO:0007669"/>
    <property type="project" value="UniProtKB-KW"/>
</dbReference>
<dbReference type="GO" id="GO:2001070">
    <property type="term" value="F:starch binding"/>
    <property type="evidence" value="ECO:0007669"/>
    <property type="project" value="InterPro"/>
</dbReference>
<dbReference type="GO" id="GO:0000272">
    <property type="term" value="P:polysaccharide catabolic process"/>
    <property type="evidence" value="ECO:0007669"/>
    <property type="project" value="UniProtKB-KW"/>
</dbReference>
<dbReference type="CDD" id="cd05811">
    <property type="entry name" value="CBM20_glucoamylase"/>
    <property type="match status" value="1"/>
</dbReference>
<dbReference type="FunFam" id="2.60.40.10:FF:000552">
    <property type="entry name" value="Related to glucoamylase"/>
    <property type="match status" value="1"/>
</dbReference>
<dbReference type="Gene3D" id="2.60.40.10">
    <property type="entry name" value="Immunoglobulins"/>
    <property type="match status" value="1"/>
</dbReference>
<dbReference type="InterPro" id="IPR013784">
    <property type="entry name" value="Carb-bd-like_fold"/>
</dbReference>
<dbReference type="InterPro" id="IPR002044">
    <property type="entry name" value="CBM20"/>
</dbReference>
<dbReference type="InterPro" id="IPR034836">
    <property type="entry name" value="CBM20_glucoamylase"/>
</dbReference>
<dbReference type="InterPro" id="IPR004302">
    <property type="entry name" value="Cellulose/chitin-bd_N"/>
</dbReference>
<dbReference type="InterPro" id="IPR013783">
    <property type="entry name" value="Ig-like_fold"/>
</dbReference>
<dbReference type="InterPro" id="IPR052282">
    <property type="entry name" value="Starch-active_LPMO"/>
</dbReference>
<dbReference type="PANTHER" id="PTHR36575">
    <property type="entry name" value="BINDING PROTEIN, PUTATIVE (AFU_ORTHOLOGUE AFUA_1G14430)-RELATED"/>
    <property type="match status" value="1"/>
</dbReference>
<dbReference type="PANTHER" id="PTHR36575:SF2">
    <property type="entry name" value="CHITIN-BINDING TYPE-4 DOMAIN-CONTAINING PROTEIN-RELATED"/>
    <property type="match status" value="1"/>
</dbReference>
<dbReference type="Pfam" id="PF00686">
    <property type="entry name" value="CBM_20"/>
    <property type="match status" value="1"/>
</dbReference>
<dbReference type="Pfam" id="PF03067">
    <property type="entry name" value="LPMO_10"/>
    <property type="match status" value="1"/>
</dbReference>
<dbReference type="SMART" id="SM01065">
    <property type="entry name" value="CBM_2"/>
    <property type="match status" value="1"/>
</dbReference>
<dbReference type="SUPFAM" id="SSF49452">
    <property type="entry name" value="Starch-binding domain-like"/>
    <property type="match status" value="1"/>
</dbReference>
<dbReference type="PROSITE" id="PS51166">
    <property type="entry name" value="CBM20"/>
    <property type="match status" value="1"/>
</dbReference>
<reference key="1">
    <citation type="submission" date="2005-09" db="EMBL/GenBank/DDBJ databases">
        <title>Annotation of the Aspergillus terreus NIH2624 genome.</title>
        <authorList>
            <person name="Birren B.W."/>
            <person name="Lander E.S."/>
            <person name="Galagan J.E."/>
            <person name="Nusbaum C."/>
            <person name="Devon K."/>
            <person name="Henn M."/>
            <person name="Ma L.-J."/>
            <person name="Jaffe D.B."/>
            <person name="Butler J."/>
            <person name="Alvarez P."/>
            <person name="Gnerre S."/>
            <person name="Grabherr M."/>
            <person name="Kleber M."/>
            <person name="Mauceli E.W."/>
            <person name="Brockman W."/>
            <person name="Rounsley S."/>
            <person name="Young S.K."/>
            <person name="LaButti K."/>
            <person name="Pushparaj V."/>
            <person name="DeCaprio D."/>
            <person name="Crawford M."/>
            <person name="Koehrsen M."/>
            <person name="Engels R."/>
            <person name="Montgomery P."/>
            <person name="Pearson M."/>
            <person name="Howarth C."/>
            <person name="Larson L."/>
            <person name="Luoma S."/>
            <person name="White J."/>
            <person name="Alvarado L."/>
            <person name="Kodira C.D."/>
            <person name="Zeng Q."/>
            <person name="Oleary S."/>
            <person name="Yandava C."/>
            <person name="Denning D.W."/>
            <person name="Nierman W.C."/>
            <person name="Milne T."/>
            <person name="Madden K."/>
        </authorList>
    </citation>
    <scope>NUCLEOTIDE SEQUENCE [LARGE SCALE GENOMIC DNA]</scope>
    <source>
        <strain>NIH 2624 / FGSC A1156</strain>
    </source>
</reference>
<reference key="2">
    <citation type="journal article" date="2016" name="FEBS Lett.">
        <title>Fungal lytic polysaccharide monooxygenases bind starch and beta-cyclodextrin similarly to amylolytic hydrolases.</title>
        <authorList>
            <person name="Nekiunaite L."/>
            <person name="Isaksen T."/>
            <person name="Vaaje-Kolstad G."/>
            <person name="Abou Hachem M."/>
        </authorList>
    </citation>
    <scope>FUNCTION</scope>
    <scope>CATALYTIC ACTIVITY</scope>
    <scope>ACTIVITY REGULATION</scope>
    <scope>GLYCOSYLATION</scope>
    <scope>SUBCELLULAR LOCATION</scope>
</reference>
<proteinExistence type="evidence at protein level"/>
<gene>
    <name evidence="8" type="primary">LPMO13A</name>
    <name type="ORF">ATEG_07286</name>
</gene>
<organism>
    <name type="scientific">Aspergillus terreus (strain NIH 2624 / FGSC A1156)</name>
    <dbReference type="NCBI Taxonomy" id="341663"/>
    <lineage>
        <taxon>Eukaryota</taxon>
        <taxon>Fungi</taxon>
        <taxon>Dikarya</taxon>
        <taxon>Ascomycota</taxon>
        <taxon>Pezizomycotina</taxon>
        <taxon>Eurotiomycetes</taxon>
        <taxon>Eurotiomycetidae</taxon>
        <taxon>Eurotiales</taxon>
        <taxon>Aspergillaceae</taxon>
        <taxon>Aspergillus</taxon>
        <taxon>Aspergillus subgen. Circumdati</taxon>
    </lineage>
</organism>
<protein>
    <recommendedName>
        <fullName evidence="8">AA13 family lytic polysaccharide monooxygenase A</fullName>
        <shortName evidence="8">LPMO13A</shortName>
        <ecNumber evidence="7">1.14.99.55</ecNumber>
    </recommendedName>
</protein>